<name>PIKA2_STRVZ</name>
<reference key="1">
    <citation type="journal article" date="1998" name="Proc. Natl. Acad. Sci. U.S.A.">
        <title>A gene cluster for macrolide antibiotic biosynthesis in Streptomyces venezuelae: architecture of metabolic diversity.</title>
        <authorList>
            <person name="Xue Y."/>
            <person name="Zhao L."/>
            <person name="Liu H.W."/>
            <person name="Sherman D.H."/>
        </authorList>
    </citation>
    <scope>NUCLEOTIDE SEQUENCE [GENOMIC DNA]</scope>
    <scope>PATHWAY</scope>
    <source>
        <strain>ATCC 15439 / DSM 41110 / IMRU3627 / M-2140</strain>
    </source>
</reference>
<reference key="2">
    <citation type="journal article" date="1999" name="Chem. Biol.">
        <title>Elucidating the mechanism of chain termination switching in the picromycin/methymycin polyketide synthase.</title>
        <authorList>
            <person name="Tang L."/>
            <person name="Fu H."/>
            <person name="Betlach M.C."/>
            <person name="McDaniel R."/>
        </authorList>
    </citation>
    <scope>FUNCTION</scope>
    <scope>CATALYTIC ACTIVITY</scope>
</reference>
<reference key="3">
    <citation type="journal article" date="2009" name="Bioorg. Med. Chem.">
        <title>The methymycin/pikromycin pathway: a model for metabolic diversity in natural product biosynthesis.</title>
        <authorList>
            <person name="Kittendorf J.D."/>
            <person name="Sherman D.H."/>
        </authorList>
    </citation>
    <scope>FUNCTION</scope>
    <scope>PATHWAY</scope>
    <scope>SUBUNIT</scope>
</reference>
<reference key="4">
    <citation type="journal article" date="2011" name="J. Mol. Biol.">
        <title>Structural and functional analysis of C2-type ketoreductases from modular polyketide synthases.</title>
        <authorList>
            <person name="Zheng J."/>
            <person name="Keatinge-Clay A.T."/>
        </authorList>
    </citation>
    <scope>X-RAY CRYSTALLOGRAPHY (1.88 ANGSTROMS) OF 920-1423</scope>
    <scope>FUNCTION</scope>
    <scope>CATALYTIC ACTIVITY</scope>
    <scope>REACTION MECHANISM</scope>
    <scope>COFACTOR</scope>
    <scope>ACTIVE SITE</scope>
    <scope>SUBUNIT</scope>
</reference>
<feature type="chain" id="PRO_0000436358" description="Pikromycin polyketide synthase component PikAII">
    <location>
        <begin position="1"/>
        <end position="3739"/>
    </location>
</feature>
<feature type="domain" description="Ketosynthase family 3 (KS3) 1" evidence="4">
    <location>
        <begin position="35"/>
        <end position="463"/>
    </location>
</feature>
<feature type="domain" description="Carrier 1" evidence="3">
    <location>
        <begin position="1445"/>
        <end position="1520"/>
    </location>
</feature>
<feature type="domain" description="Ketosynthase family 3 (KS3) 2" evidence="4">
    <location>
        <begin position="1539"/>
        <end position="1967"/>
    </location>
</feature>
<feature type="domain" description="PKS/mFAS DH" evidence="5">
    <location>
        <begin position="2428"/>
        <end position="2705"/>
    </location>
</feature>
<feature type="domain" description="Carrier 2" evidence="3">
    <location>
        <begin position="3570"/>
        <end position="3645"/>
    </location>
</feature>
<feature type="region of interest" description="Module 3" evidence="11">
    <location>
        <begin position="38"/>
        <end position="1517"/>
    </location>
</feature>
<feature type="region of interest" description="Acyltransferase 1" evidence="11">
    <location>
        <begin position="572"/>
        <end position="877"/>
    </location>
</feature>
<feature type="region of interest" description="C2-type beta-ketoacyl reductase 1" evidence="13">
    <location>
        <begin position="1150"/>
        <end position="1343"/>
    </location>
</feature>
<feature type="region of interest" description="Module 4" evidence="11">
    <location>
        <begin position="1542"/>
        <end position="3642"/>
    </location>
</feature>
<feature type="region of interest" description="Acyltransferase 2" evidence="11">
    <location>
        <begin position="2069"/>
        <end position="2374"/>
    </location>
</feature>
<feature type="region of interest" description="Dehydratase" evidence="11">
    <location>
        <begin position="2428"/>
        <end position="2703"/>
    </location>
</feature>
<feature type="region of interest" description="N-terminal hotdog fold" evidence="5">
    <location>
        <begin position="2428"/>
        <end position="2553"/>
    </location>
</feature>
<feature type="region of interest" description="C-terminal hotdog fold" evidence="5">
    <location>
        <begin position="2567"/>
        <end position="2705"/>
    </location>
</feature>
<feature type="region of interest" description="Enoyl reductase" evidence="11">
    <location>
        <begin position="2959"/>
        <end position="3267"/>
    </location>
</feature>
<feature type="region of interest" description="Beta-ketoacyl reductase 2" evidence="11">
    <location>
        <begin position="3277"/>
        <end position="3458"/>
    </location>
</feature>
<feature type="active site" description="Acyl-thioester intermediate; for beta-ketoacyl synthase 1 activity" evidence="4">
    <location>
        <position position="208"/>
    </location>
</feature>
<feature type="active site" description="For beta-ketoacyl synthase 1 activity" evidence="4">
    <location>
        <position position="343"/>
    </location>
</feature>
<feature type="active site" description="For beta-ketoacyl synthase 1 activity" evidence="4">
    <location>
        <position position="383"/>
    </location>
</feature>
<feature type="active site" description="Acyl-ester intermediate; for acyltransferase 1 activity" evidence="6">
    <location>
        <position position="662"/>
    </location>
</feature>
<feature type="active site" description="For C2-type beta-ketoacyl reductase 1 and probable racemase activities" evidence="2 13">
    <location>
        <position position="1313"/>
    </location>
</feature>
<feature type="active site" description="Acyl-thioester intermediate; for beta-ketoacyl synthase 2 activity" evidence="4">
    <location>
        <position position="1712"/>
    </location>
</feature>
<feature type="active site" description="For beta-ketoacyl synthase 2 activity" evidence="4">
    <location>
        <position position="1847"/>
    </location>
</feature>
<feature type="active site" description="For beta-ketoacyl synthase 2 activity" evidence="4">
    <location>
        <position position="1887"/>
    </location>
</feature>
<feature type="active site" description="Acyl-ester intermediate; for acyltransferase 2 activity" evidence="6">
    <location>
        <position position="2159"/>
    </location>
</feature>
<feature type="active site" description="Proton acceptor; for dehydratase activity" evidence="5">
    <location>
        <position position="2460"/>
    </location>
</feature>
<feature type="active site" description="Proton donor; for dehydratase activity" evidence="5">
    <location>
        <position position="2629"/>
    </location>
</feature>
<feature type="active site" description="For enoyl reductase activity" evidence="2">
    <location>
        <position position="3005"/>
    </location>
</feature>
<feature type="active site" description="For beta-ketoacyl reductase 2 activity" evidence="11">
    <location>
        <position position="3427"/>
    </location>
</feature>
<feature type="binding site" evidence="2">
    <location>
        <begin position="3092"/>
        <end position="3109"/>
    </location>
    <ligand>
        <name>NADP(+)</name>
        <dbReference type="ChEBI" id="CHEBI:58349"/>
        <label>1</label>
        <note>for enoyl reductase activity</note>
    </ligand>
</feature>
<feature type="binding site" evidence="11">
    <location>
        <begin position="3285"/>
        <end position="3288"/>
    </location>
    <ligand>
        <name>NADP(+)</name>
        <dbReference type="ChEBI" id="CHEBI:58349"/>
        <label>2</label>
        <note>for beta-ketoacyl reductase 2 activity</note>
    </ligand>
</feature>
<feature type="binding site" evidence="11">
    <location>
        <begin position="3309"/>
        <end position="3312"/>
    </location>
    <ligand>
        <name>NADP(+)</name>
        <dbReference type="ChEBI" id="CHEBI:58349"/>
        <label>2</label>
        <note>for beta-ketoacyl reductase 2 activity</note>
    </ligand>
</feature>
<feature type="binding site" evidence="11">
    <location>
        <begin position="3338"/>
        <end position="3339"/>
    </location>
    <ligand>
        <name>NADP(+)</name>
        <dbReference type="ChEBI" id="CHEBI:58349"/>
        <label>2</label>
        <note>for beta-ketoacyl reductase 2 activity</note>
    </ligand>
</feature>
<feature type="binding site" evidence="1">
    <location>
        <position position="3388"/>
    </location>
    <ligand>
        <name>NADP(+)</name>
        <dbReference type="ChEBI" id="CHEBI:58349"/>
        <label>2</label>
        <note>for beta-ketoacyl reductase 2 activity</note>
    </ligand>
</feature>
<feature type="binding site" evidence="11">
    <location>
        <begin position="3412"/>
        <end position="3413"/>
    </location>
    <ligand>
        <name>NADP(+)</name>
        <dbReference type="ChEBI" id="CHEBI:58349"/>
        <label>2</label>
        <note>for beta-ketoacyl reductase 2 activity</note>
    </ligand>
</feature>
<feature type="modified residue" description="O-(pantetheine 4'-phosphoryl)serine" evidence="3">
    <location>
        <position position="1480"/>
    </location>
</feature>
<feature type="modified residue" description="O-(pantetheine 4'-phosphoryl)serine" evidence="3">
    <location>
        <position position="3605"/>
    </location>
</feature>
<feature type="helix" evidence="15">
    <location>
        <begin position="924"/>
        <end position="926"/>
    </location>
</feature>
<feature type="strand" evidence="15">
    <location>
        <begin position="927"/>
        <end position="934"/>
    </location>
</feature>
<feature type="strand" evidence="15">
    <location>
        <begin position="948"/>
        <end position="955"/>
    </location>
</feature>
<feature type="helix" evidence="15">
    <location>
        <begin position="956"/>
        <end position="958"/>
    </location>
</feature>
<feature type="turn" evidence="15">
    <location>
        <begin position="960"/>
        <end position="962"/>
    </location>
</feature>
<feature type="helix" evidence="15">
    <location>
        <begin position="963"/>
        <end position="971"/>
    </location>
</feature>
<feature type="strand" evidence="15">
    <location>
        <begin position="975"/>
        <end position="981"/>
    </location>
</feature>
<feature type="helix" evidence="15">
    <location>
        <begin position="987"/>
        <end position="1000"/>
    </location>
</feature>
<feature type="strand" evidence="15">
    <location>
        <begin position="1006"/>
        <end position="1010"/>
    </location>
</feature>
<feature type="helix" evidence="15">
    <location>
        <begin position="1012"/>
        <end position="1014"/>
    </location>
</feature>
<feature type="helix" evidence="15">
    <location>
        <begin position="1028"/>
        <end position="1042"/>
    </location>
</feature>
<feature type="strand" evidence="15">
    <location>
        <begin position="1049"/>
        <end position="1055"/>
    </location>
</feature>
<feature type="helix" evidence="15">
    <location>
        <begin position="1068"/>
        <end position="1083"/>
    </location>
</feature>
<feature type="turn" evidence="15">
    <location>
        <begin position="1085"/>
        <end position="1087"/>
    </location>
</feature>
<feature type="strand" evidence="15">
    <location>
        <begin position="1088"/>
        <end position="1094"/>
    </location>
</feature>
<feature type="helix" evidence="15">
    <location>
        <begin position="1100"/>
        <end position="1110"/>
    </location>
</feature>
<feature type="strand" evidence="15">
    <location>
        <begin position="1117"/>
        <end position="1122"/>
    </location>
</feature>
<feature type="strand" evidence="15">
    <location>
        <begin position="1125"/>
        <end position="1133"/>
    </location>
</feature>
<feature type="strand" evidence="15">
    <location>
        <begin position="1150"/>
        <end position="1156"/>
    </location>
</feature>
<feature type="helix" evidence="15">
    <location>
        <begin position="1160"/>
        <end position="1172"/>
    </location>
</feature>
<feature type="strand" evidence="15">
    <location>
        <begin position="1176"/>
        <end position="1181"/>
    </location>
</feature>
<feature type="helix" evidence="15">
    <location>
        <begin position="1202"/>
        <end position="1211"/>
    </location>
</feature>
<feature type="strand" evidence="15">
    <location>
        <begin position="1214"/>
        <end position="1219"/>
    </location>
</feature>
<feature type="helix" evidence="15">
    <location>
        <begin position="1225"/>
        <end position="1233"/>
    </location>
</feature>
<feature type="strand" evidence="15">
    <location>
        <begin position="1241"/>
        <end position="1246"/>
    </location>
</feature>
<feature type="turn" evidence="15">
    <location>
        <begin position="1256"/>
        <end position="1258"/>
    </location>
</feature>
<feature type="helix" evidence="15">
    <location>
        <begin position="1261"/>
        <end position="1284"/>
    </location>
</feature>
<feature type="strand" evidence="15">
    <location>
        <begin position="1294"/>
        <end position="1300"/>
    </location>
</feature>
<feature type="turn" evidence="15">
    <location>
        <begin position="1301"/>
        <end position="1305"/>
    </location>
</feature>
<feature type="helix" evidence="15">
    <location>
        <begin position="1311"/>
        <end position="1324"/>
    </location>
</feature>
<feature type="strand" evidence="15">
    <location>
        <begin position="1333"/>
        <end position="1339"/>
    </location>
</feature>
<feature type="helix" evidence="15">
    <location>
        <begin position="1346"/>
        <end position="1348"/>
    </location>
</feature>
<feature type="helix" evidence="15">
    <location>
        <begin position="1351"/>
        <end position="1358"/>
    </location>
</feature>
<feature type="helix" evidence="15">
    <location>
        <begin position="1366"/>
        <end position="1379"/>
    </location>
</feature>
<feature type="strand" evidence="15">
    <location>
        <begin position="1382"/>
        <end position="1386"/>
    </location>
</feature>
<feature type="helix" evidence="15">
    <location>
        <begin position="1391"/>
        <end position="1399"/>
    </location>
</feature>
<feature type="strand" evidence="15">
    <location>
        <begin position="1400"/>
        <end position="1402"/>
    </location>
</feature>
<feature type="turn" evidence="15">
    <location>
        <begin position="1406"/>
        <end position="1409"/>
    </location>
</feature>
<feature type="helix" evidence="15">
    <location>
        <begin position="1411"/>
        <end position="1414"/>
    </location>
</feature>
<organism>
    <name type="scientific">Streptomyces venezuelae</name>
    <dbReference type="NCBI Taxonomy" id="54571"/>
    <lineage>
        <taxon>Bacteria</taxon>
        <taxon>Bacillati</taxon>
        <taxon>Actinomycetota</taxon>
        <taxon>Actinomycetes</taxon>
        <taxon>Kitasatosporales</taxon>
        <taxon>Streptomycetaceae</taxon>
        <taxon>Streptomyces</taxon>
    </lineage>
</organism>
<dbReference type="EC" id="2.3.1.239" evidence="7 13"/>
<dbReference type="EC" id="2.3.1.240" evidence="7 13"/>
<dbReference type="EMBL" id="AF079138">
    <property type="protein sequence ID" value="AAC69330.1"/>
    <property type="molecule type" value="Genomic_DNA"/>
</dbReference>
<dbReference type="PIR" id="T17410">
    <property type="entry name" value="T17410"/>
</dbReference>
<dbReference type="PDB" id="3QP9">
    <property type="method" value="X-ray"/>
    <property type="resolution" value="1.88 A"/>
    <property type="chains" value="A/B/C/D=920-1423"/>
</dbReference>
<dbReference type="PDBsum" id="3QP9"/>
<dbReference type="SMR" id="Q9ZGI4"/>
<dbReference type="KEGG" id="ag:AAC69330"/>
<dbReference type="BioCyc" id="MetaCyc:MONOMER-18412"/>
<dbReference type="BRENDA" id="2.3.1.239">
    <property type="organism ID" value="6106"/>
</dbReference>
<dbReference type="BRENDA" id="2.3.1.240">
    <property type="organism ID" value="6106"/>
</dbReference>
<dbReference type="EvolutionaryTrace" id="Q9ZGI4"/>
<dbReference type="GO" id="GO:0004315">
    <property type="term" value="F:3-oxoacyl-[acyl-carrier-protein] synthase activity"/>
    <property type="evidence" value="ECO:0007669"/>
    <property type="project" value="InterPro"/>
</dbReference>
<dbReference type="GO" id="GO:0016747">
    <property type="term" value="F:acyltransferase activity, transferring groups other than amino-acyl groups"/>
    <property type="evidence" value="ECO:0000314"/>
    <property type="project" value="UniProtKB"/>
</dbReference>
<dbReference type="GO" id="GO:0004312">
    <property type="term" value="F:fatty acid synthase activity"/>
    <property type="evidence" value="ECO:0007669"/>
    <property type="project" value="TreeGrafter"/>
</dbReference>
<dbReference type="GO" id="GO:0016491">
    <property type="term" value="F:oxidoreductase activity"/>
    <property type="evidence" value="ECO:0007669"/>
    <property type="project" value="InterPro"/>
</dbReference>
<dbReference type="GO" id="GO:0031177">
    <property type="term" value="F:phosphopantetheine binding"/>
    <property type="evidence" value="ECO:0000304"/>
    <property type="project" value="UniProtKB"/>
</dbReference>
<dbReference type="GO" id="GO:0008270">
    <property type="term" value="F:zinc ion binding"/>
    <property type="evidence" value="ECO:0007669"/>
    <property type="project" value="InterPro"/>
</dbReference>
<dbReference type="GO" id="GO:0006633">
    <property type="term" value="P:fatty acid biosynthetic process"/>
    <property type="evidence" value="ECO:0007669"/>
    <property type="project" value="InterPro"/>
</dbReference>
<dbReference type="GO" id="GO:0033068">
    <property type="term" value="P:macrolide biosynthetic process"/>
    <property type="evidence" value="ECO:0000314"/>
    <property type="project" value="UniProtKB"/>
</dbReference>
<dbReference type="CDD" id="cd05195">
    <property type="entry name" value="enoyl_red"/>
    <property type="match status" value="1"/>
</dbReference>
<dbReference type="CDD" id="cd08952">
    <property type="entry name" value="KR_1_SDR_x"/>
    <property type="match status" value="1"/>
</dbReference>
<dbReference type="CDD" id="cd08956">
    <property type="entry name" value="KR_3_FAS_SDR_x"/>
    <property type="match status" value="1"/>
</dbReference>
<dbReference type="CDD" id="cd00833">
    <property type="entry name" value="PKS"/>
    <property type="match status" value="2"/>
</dbReference>
<dbReference type="FunFam" id="3.40.50.720:FF:000550">
    <property type="entry name" value="AmphB polyketide synthase"/>
    <property type="match status" value="1"/>
</dbReference>
<dbReference type="FunFam" id="3.40.50.720:FF:000209">
    <property type="entry name" value="Polyketide synthase Pks12"/>
    <property type="match status" value="1"/>
</dbReference>
<dbReference type="FunFam" id="3.40.47.10:FF:000019">
    <property type="entry name" value="Polyketide synthase type I"/>
    <property type="match status" value="2"/>
</dbReference>
<dbReference type="FunFam" id="3.40.366.10:FF:000002">
    <property type="entry name" value="Probable polyketide synthase 2"/>
    <property type="match status" value="2"/>
</dbReference>
<dbReference type="FunFam" id="3.90.180.10:FF:000032">
    <property type="entry name" value="Probable polyketide synthase pks1"/>
    <property type="match status" value="1"/>
</dbReference>
<dbReference type="FunFam" id="1.10.1200.10:FF:000007">
    <property type="entry name" value="Probable polyketide synthase pks17"/>
    <property type="match status" value="2"/>
</dbReference>
<dbReference type="Gene3D" id="3.30.70.3290">
    <property type="match status" value="2"/>
</dbReference>
<dbReference type="Gene3D" id="3.40.47.10">
    <property type="match status" value="2"/>
</dbReference>
<dbReference type="Gene3D" id="3.40.50.11460">
    <property type="match status" value="1"/>
</dbReference>
<dbReference type="Gene3D" id="1.10.1200.10">
    <property type="entry name" value="ACP-like"/>
    <property type="match status" value="2"/>
</dbReference>
<dbReference type="Gene3D" id="3.40.366.10">
    <property type="entry name" value="Malonyl-Coenzyme A Acyl Carrier Protein, domain 2"/>
    <property type="match status" value="2"/>
</dbReference>
<dbReference type="Gene3D" id="3.90.180.10">
    <property type="entry name" value="Medium-chain alcohol dehydrogenases, catalytic domain"/>
    <property type="match status" value="1"/>
</dbReference>
<dbReference type="Gene3D" id="3.40.50.720">
    <property type="entry name" value="NAD(P)-binding Rossmann-like Domain"/>
    <property type="match status" value="2"/>
</dbReference>
<dbReference type="Gene3D" id="3.10.129.110">
    <property type="entry name" value="Polyketide synthase dehydratase"/>
    <property type="match status" value="1"/>
</dbReference>
<dbReference type="InterPro" id="IPR001227">
    <property type="entry name" value="Ac_transferase_dom_sf"/>
</dbReference>
<dbReference type="InterPro" id="IPR036736">
    <property type="entry name" value="ACP-like_sf"/>
</dbReference>
<dbReference type="InterPro" id="IPR014043">
    <property type="entry name" value="Acyl_transferase_dom"/>
</dbReference>
<dbReference type="InterPro" id="IPR016035">
    <property type="entry name" value="Acyl_Trfase/lysoPLipase"/>
</dbReference>
<dbReference type="InterPro" id="IPR013154">
    <property type="entry name" value="ADH-like_N"/>
</dbReference>
<dbReference type="InterPro" id="IPR011032">
    <property type="entry name" value="GroES-like_sf"/>
</dbReference>
<dbReference type="InterPro" id="IPR018201">
    <property type="entry name" value="Ketoacyl_synth_AS"/>
</dbReference>
<dbReference type="InterPro" id="IPR014031">
    <property type="entry name" value="Ketoacyl_synth_C"/>
</dbReference>
<dbReference type="InterPro" id="IPR014030">
    <property type="entry name" value="Ketoacyl_synth_N"/>
</dbReference>
<dbReference type="InterPro" id="IPR016036">
    <property type="entry name" value="Malonyl_transacylase_ACP-bd"/>
</dbReference>
<dbReference type="InterPro" id="IPR036291">
    <property type="entry name" value="NAD(P)-bd_dom_sf"/>
</dbReference>
<dbReference type="InterPro" id="IPR015083">
    <property type="entry name" value="NorB/c/GfsB-D-like_docking"/>
</dbReference>
<dbReference type="InterPro" id="IPR032821">
    <property type="entry name" value="PKS_assoc"/>
</dbReference>
<dbReference type="InterPro" id="IPR020841">
    <property type="entry name" value="PKS_Beta-ketoAc_synthase_dom"/>
</dbReference>
<dbReference type="InterPro" id="IPR042104">
    <property type="entry name" value="PKS_dehydratase_sf"/>
</dbReference>
<dbReference type="InterPro" id="IPR020807">
    <property type="entry name" value="PKS_DH"/>
</dbReference>
<dbReference type="InterPro" id="IPR049551">
    <property type="entry name" value="PKS_DH_C"/>
</dbReference>
<dbReference type="InterPro" id="IPR049552">
    <property type="entry name" value="PKS_DH_N"/>
</dbReference>
<dbReference type="InterPro" id="IPR020843">
    <property type="entry name" value="PKS_ER"/>
</dbReference>
<dbReference type="InterPro" id="IPR013968">
    <property type="entry name" value="PKS_KR"/>
</dbReference>
<dbReference type="InterPro" id="IPR049900">
    <property type="entry name" value="PKS_mFAS_DH"/>
</dbReference>
<dbReference type="InterPro" id="IPR050091">
    <property type="entry name" value="PKS_NRPS_Biosynth_Enz"/>
</dbReference>
<dbReference type="InterPro" id="IPR020806">
    <property type="entry name" value="PKS_PP-bd"/>
</dbReference>
<dbReference type="InterPro" id="IPR009081">
    <property type="entry name" value="PP-bd_ACP"/>
</dbReference>
<dbReference type="InterPro" id="IPR006162">
    <property type="entry name" value="Ppantetheine_attach_site"/>
</dbReference>
<dbReference type="InterPro" id="IPR002364">
    <property type="entry name" value="Quin_OxRdtase/zeta-crystal_CS"/>
</dbReference>
<dbReference type="InterPro" id="IPR055123">
    <property type="entry name" value="SpnB-like_Rossmann"/>
</dbReference>
<dbReference type="InterPro" id="IPR016039">
    <property type="entry name" value="Thiolase-like"/>
</dbReference>
<dbReference type="PANTHER" id="PTHR43775">
    <property type="entry name" value="FATTY ACID SYNTHASE"/>
    <property type="match status" value="1"/>
</dbReference>
<dbReference type="PANTHER" id="PTHR43775:SF51">
    <property type="entry name" value="INACTIVE PHENOLPHTHIOCEROL SYNTHESIS POLYKETIDE SYNTHASE TYPE I PKS1-RELATED"/>
    <property type="match status" value="1"/>
</dbReference>
<dbReference type="Pfam" id="PF00698">
    <property type="entry name" value="Acyl_transf_1"/>
    <property type="match status" value="2"/>
</dbReference>
<dbReference type="Pfam" id="PF08240">
    <property type="entry name" value="ADH_N"/>
    <property type="match status" value="1"/>
</dbReference>
<dbReference type="Pfam" id="PF13602">
    <property type="entry name" value="ADH_zinc_N_2"/>
    <property type="match status" value="1"/>
</dbReference>
<dbReference type="Pfam" id="PF08990">
    <property type="entry name" value="Docking"/>
    <property type="match status" value="1"/>
</dbReference>
<dbReference type="Pfam" id="PF16197">
    <property type="entry name" value="KAsynt_C_assoc"/>
    <property type="match status" value="2"/>
</dbReference>
<dbReference type="Pfam" id="PF00109">
    <property type="entry name" value="ketoacyl-synt"/>
    <property type="match status" value="2"/>
</dbReference>
<dbReference type="Pfam" id="PF02801">
    <property type="entry name" value="Ketoacyl-synt_C"/>
    <property type="match status" value="2"/>
</dbReference>
<dbReference type="Pfam" id="PF08659">
    <property type="entry name" value="KR"/>
    <property type="match status" value="2"/>
</dbReference>
<dbReference type="Pfam" id="PF21089">
    <property type="entry name" value="PKS_DH_N"/>
    <property type="match status" value="1"/>
</dbReference>
<dbReference type="Pfam" id="PF00550">
    <property type="entry name" value="PP-binding"/>
    <property type="match status" value="2"/>
</dbReference>
<dbReference type="Pfam" id="PF14765">
    <property type="entry name" value="PS-DH"/>
    <property type="match status" value="1"/>
</dbReference>
<dbReference type="Pfam" id="PF22953">
    <property type="entry name" value="SpnB_Rossmann"/>
    <property type="match status" value="1"/>
</dbReference>
<dbReference type="SMART" id="SM00827">
    <property type="entry name" value="PKS_AT"/>
    <property type="match status" value="2"/>
</dbReference>
<dbReference type="SMART" id="SM00826">
    <property type="entry name" value="PKS_DH"/>
    <property type="match status" value="1"/>
</dbReference>
<dbReference type="SMART" id="SM00829">
    <property type="entry name" value="PKS_ER"/>
    <property type="match status" value="1"/>
</dbReference>
<dbReference type="SMART" id="SM00822">
    <property type="entry name" value="PKS_KR"/>
    <property type="match status" value="2"/>
</dbReference>
<dbReference type="SMART" id="SM00825">
    <property type="entry name" value="PKS_KS"/>
    <property type="match status" value="2"/>
</dbReference>
<dbReference type="SMART" id="SM00823">
    <property type="entry name" value="PKS_PP"/>
    <property type="match status" value="2"/>
</dbReference>
<dbReference type="SMART" id="SM01294">
    <property type="entry name" value="PKS_PP_betabranch"/>
    <property type="match status" value="2"/>
</dbReference>
<dbReference type="SUPFAM" id="SSF47336">
    <property type="entry name" value="ACP-like"/>
    <property type="match status" value="2"/>
</dbReference>
<dbReference type="SUPFAM" id="SSF52151">
    <property type="entry name" value="FabD/lysophospholipase-like"/>
    <property type="match status" value="2"/>
</dbReference>
<dbReference type="SUPFAM" id="SSF50129">
    <property type="entry name" value="GroES-like"/>
    <property type="match status" value="1"/>
</dbReference>
<dbReference type="SUPFAM" id="SSF51735">
    <property type="entry name" value="NAD(P)-binding Rossmann-fold domains"/>
    <property type="match status" value="5"/>
</dbReference>
<dbReference type="SUPFAM" id="SSF55048">
    <property type="entry name" value="Probable ACP-binding domain of malonyl-CoA ACP transacylase"/>
    <property type="match status" value="2"/>
</dbReference>
<dbReference type="SUPFAM" id="SSF53901">
    <property type="entry name" value="Thiolase-like"/>
    <property type="match status" value="2"/>
</dbReference>
<dbReference type="PROSITE" id="PS50075">
    <property type="entry name" value="CARRIER"/>
    <property type="match status" value="2"/>
</dbReference>
<dbReference type="PROSITE" id="PS00606">
    <property type="entry name" value="KS3_1"/>
    <property type="match status" value="2"/>
</dbReference>
<dbReference type="PROSITE" id="PS52004">
    <property type="entry name" value="KS3_2"/>
    <property type="match status" value="2"/>
</dbReference>
<dbReference type="PROSITE" id="PS00012">
    <property type="entry name" value="PHOSPHOPANTETHEINE"/>
    <property type="match status" value="2"/>
</dbReference>
<dbReference type="PROSITE" id="PS52019">
    <property type="entry name" value="PKS_MFAS_DH"/>
    <property type="match status" value="1"/>
</dbReference>
<dbReference type="PROSITE" id="PS01162">
    <property type="entry name" value="QOR_ZETA_CRYSTAL"/>
    <property type="match status" value="1"/>
</dbReference>
<keyword id="KW-0002">3D-structure</keyword>
<keyword id="KW-0012">Acyltransferase</keyword>
<keyword id="KW-0045">Antibiotic biosynthesis</keyword>
<keyword id="KW-0511">Multifunctional enzyme</keyword>
<keyword id="KW-0521">NADP</keyword>
<keyword id="KW-0596">Phosphopantetheine</keyword>
<keyword id="KW-0597">Phosphoprotein</keyword>
<keyword id="KW-0677">Repeat</keyword>
<keyword id="KW-0808">Transferase</keyword>
<accession>Q9ZGI4</accession>
<proteinExistence type="evidence at protein level"/>
<gene>
    <name evidence="10" type="primary">pikAII</name>
</gene>
<protein>
    <recommendedName>
        <fullName evidence="9">Pikromycin polyketide synthase component PikAII</fullName>
        <shortName evidence="9">Pikromycin PKS component PikAII</shortName>
        <ecNumber evidence="7 13">2.3.1.239</ecNumber>
        <ecNumber evidence="7 13">2.3.1.240</ecNumber>
    </recommendedName>
    <alternativeName>
        <fullName evidence="11">Narbonolide/10-deoxymethynolide synthase PikA2, modules 3 and 4</fullName>
    </alternativeName>
    <alternativeName>
        <fullName evidence="11">Narbonolide/10-deoxymethynolide synthase PikAII</fullName>
    </alternativeName>
    <alternativeName>
        <fullName evidence="9">Type I modular polyketide synthase PikAII</fullName>
        <shortName evidence="9">PKS</shortName>
    </alternativeName>
</protein>
<evidence type="ECO:0000250" key="1">
    <source>
        <dbReference type="UniProtKB" id="Q03131"/>
    </source>
</evidence>
<evidence type="ECO:0000250" key="2">
    <source>
        <dbReference type="UniProtKB" id="Q03132"/>
    </source>
</evidence>
<evidence type="ECO:0000255" key="3">
    <source>
        <dbReference type="PROSITE-ProRule" id="PRU00258"/>
    </source>
</evidence>
<evidence type="ECO:0000255" key="4">
    <source>
        <dbReference type="PROSITE-ProRule" id="PRU01348"/>
    </source>
</evidence>
<evidence type="ECO:0000255" key="5">
    <source>
        <dbReference type="PROSITE-ProRule" id="PRU01363"/>
    </source>
</evidence>
<evidence type="ECO:0000255" key="6">
    <source>
        <dbReference type="PROSITE-ProRule" id="PRU10022"/>
    </source>
</evidence>
<evidence type="ECO:0000269" key="7">
    <source>
    </source>
</evidence>
<evidence type="ECO:0000269" key="8">
    <source>
    </source>
</evidence>
<evidence type="ECO:0000303" key="9">
    <source>
    </source>
</evidence>
<evidence type="ECO:0000303" key="10">
    <source>
    </source>
</evidence>
<evidence type="ECO:0000305" key="11"/>
<evidence type="ECO:0000305" key="12">
    <source>
    </source>
</evidence>
<evidence type="ECO:0000305" key="13">
    <source>
    </source>
</evidence>
<evidence type="ECO:0000305" key="14">
    <source>
    </source>
</evidence>
<evidence type="ECO:0007829" key="15">
    <source>
        <dbReference type="PDB" id="3QP9"/>
    </source>
</evidence>
<sequence>MSTVNEEKYLDYLRRATADLHEARGRLRELEAKAGEPVAIVGMACRLPGGVASPEDLWRLVAGGEDAISEFPQDRGWDVEGLYDPNPEATGKSYAREAGFLYEAGEFDADFFGISPREALAMDPQQRLLLEASWEAFEHAGIPAATARGTSVGVFTGVMYHDYATRLTDVPEGIEGYLGTGNSGSVASGRVAYTLGLEGPAVTVDTACSSSLVALHLAVQALRKGEVDMALAGGVTVMSTPSTFVEFSRQRGLAPDGRSKSFSSTADGTSWSEGVGVLLVERLSDARRKGHRILAVVRGTAVNQDGASSGLTAPNGPSQQRVIRRALADARLTTSDVDVVEAHGTGTRLGDPIEAQAVIATYGQGRDGEQPLRLGSLKSNIGHTQAAAGVSGVIKMVQAMRHGVLPKTLHVEKPTDQVDWSAGAVELLTEAMDWPDKGDGGLRRAAVSSFGVSGTNAHVVLEEAPAAEETPASEATPAVEPSVGAGLVPWLVSAKTPAALDAQIGRLAAFASQGRTDAADPGAVARVLAGGRAEFEHRAVVLGTGQDDFAQALTAPEGLIRGTPSDVGRVAFVFPGQGTQWAGMGAELLDVSKEFAAAMAECESALSRYVDWSLEAVVRQAPGAPTLERVDVVQPVTFAVMVSLAKVWQHHGVTPQAVVGHSQGEIAAAYVAGALTLDDAARVVTLRSKSIAAHLAGKGGMISLALSEEATRQRIENLHGLSIAAVNGPTATVVSGDPTQIQELAQACEADGVRARIIPVDYASHSAHVETIESELAEVLAGLSPRTPEVPFFSTLEGAWITEPVLDGTYWYRNLRHRVGFAPAVETLATDEGFTHFIEVSAHPVLTMTLPETVTGLGTLRREQGGQERLVTSLAEAWTNGLTIDWAPVLPTATGHHPELPTYAFQRRHYWLHDSPAVQGSVQDSWRYRIDWKRLAVADASERAGLSGRWLVVVPEDRSAEAAPVLAALSGAGADPVQLDVSPLGDRQRLAATLGEALAAAGGAVDGVLSLLAWDESAHPGHPAPFTRGTGATLTLVQALEDAGVAAPLWCVTHGAVSVGRADHVTSPAQAMVWGMGRVAALEHPERWGGLIDLPSDADRAALDRMTTVLAGGTGEDQVAVRASGLLARRLVRASLPAHGTASPWWQADGTVLVTGAEEPAAAEAARRLARDGAGHLLLHTTPSGSEGAEGTSGAAEDSGLAGLVAELADLGATATVVTCDLTDAEAAARLLAGVSDAHPLSAVLHLPPTVDSEPLAATDADALARVVTAKATAALHLDRLLREAAAAGGRPPVLVLFSSVAAIWGGAGQGAYAAGTAFLDALAGQHRADGPTVTSVAWSPWEGSRVTEGATGERLRRLGLRPLAPATALTALDTALGHGDTAVTIADVDWSSFAPGFTTARPGTLLADLPEARRALDEQQSTTAADDTVLSRELGALTGAEQQRRMQELVREHLAVVLNHPSPEAVDTGRAFRDLGFDSLTAVELRNRLKNATGLALPATLVFDYPTPRTLAEFLLAEILGEQAGAGEQLPVDGGVDDEPVAIVGMACRLPGGVASPEDLWRLVAGGEDAISGFPQDRGWDVEGLYDPDPDASGRTYCRAGGFLDEAGEFDADFFGISPREALAMDPQQRLLLETSWEAVEDAGIDPTSLQGQQVGVFAGTNGPHYEPLLRNTAEDLEGYVGTGNAASIMSGRVSYTLGLEGPAVTVDTACSSSLVALHLAVQALRKGECGLALAGGVTVMSTPTTFVEFSRQRGLAEDGRSKAFAASADGFGPAEGVGMLLVERLSDARRNGHRVLAVVRGSAVNQDGASNGLTAPNGPSQQRVIRRALADARLTTADVDVVEAHGTGTRLGDPIEAQALIATYGQGRDTEQPLRLGSLKSNIGHTQAAAGVSGIIKMVQAMRHGVLPKTLHVDRPSDQIDWSAGTVELLTEAMDWPRKQEGGLRRAAVSSFGISGTNAHIVLEEAPVDEDAPADEPSVGGVVPWLVSAKTPAALDAQIGRLAAFASQGRTDAADPGAVARVLAGGRAQFEHRAVALGTGQDDLAAALAAPEGLVRGVASGVGRVAFVFPGQGTQWAGMGAELLDVSKEFAAAMAECEAALAPYVDWSLEAVVRQAPGAPTLERVDVVQPVTFAVMVSLAKVWQHHGVTPQAVVGHSQGEIAAAYVAGALSLDDAARVVTLRSKSIGAHLAGQGGMLSLALSEAAVVERLAGFDGLSVAAVNGPTATVVSGDPTQIQELAQACEADGVRARIIPVDYASHSAHVETIESELADVLAGLSPQTPQVPFFSTLEGAWITEPALDGGYWYRNLRHRVGFAPAVETLATDEGFTHFVEVSAHPVLTMALPETVTGLGTLRRDNGGQHRLTTSLAEAWANGLTVDWASLLPTTTTHPDLPTYAFQTERYWPQPDLSAAGDITSAGLGAAEHPLLGAAVALADSDGCLLTGSLSLRTHPWLADHAVAGTVLLPGTAFVELAFRAGDQVGCDLVEELTLDAPLVLPRRGAVRVQLSVGASDESGRRTFGLYAHPEDAPGEAEWTRHATGVLAARADRTAPVADPEAWPPPGAEPVDVDGLYERFAANGYGYGPLFQGVRGVWRRGDEVFADVALPAEVAGAEGARFGLHPALLDAAVQAAGAGRGVRRGHAAAVRLERDLLYAVGATALRVRLAPAGPDTVSVSAADSSGQPVFAADSLTVLPVDPAQLAAFSDPTLDALHLLEWTAWDGAAQALPGAVVLGGDADGLAAALRAGGTEVLSFPDLTDLVEAVDRGETPAPATVLVACPAAGPDGPEHVREALHGSLALMQAWLADERFTDGRLVLVTRDAVAARSGDGLRSTGQAAVWGLGRSAQTESPGRFVLLDLAGEARTAGDATAGDGLTTGDATVGGTSGDAALGSALATALGSGEPQLALRDGALLVPRLARAAAPAAADGLAAADGLAALPLPAAPALWRLEPGTDGSLESLTAAPGDAETLAPEPLGPGQVRIAIRATGLNFRDVLIALGMYPDPALMGTEGAGVVTATGPGVTHLAPGDRVMGLLSGAYAPVVVADARTVARMPEGWTFAQGASVPVVFLTAVYALRDLADVKPGERLLVHSAAGGVGMAAVQLARHWGVEVHGTASHGKWDALRALGLDDAHIASSRTLDFESAFRAASGGAGMDVVLNSLAREFVDASLRLLGPGGRFVEMGKTDVRDAERVAADHPGVGYRAFDLGEAGPERIGEMLAEVIALFEDGVLRHLPVTTWDVRRARDAFRHVSQARHTGKVVLTMPSGLDPEGTVLLTGGTGALGGIVARHVVGEWGVRRLLLVSRRGTDAPGAGELVHELEALGADVSVAACDVADREALTAVLDSIPAEHPLTAVVHTAGVLSDGTLPSMTAEDVEHVLRPKVDAAFLLDELTSTPGYDLAAFVMFSSAAAVFGGAGQGAYAAANATLDALAWRRRTAGLPALSLGWGLWAETSGMTGGLSDTDRSRLARSGATPMDSELTLSLLDAAMRRDDPALVPIALDVAALRAQQRDGMLAPLLSGLTRGSRVGGAPVNQRRAAAGGAGEADTDLGGRLAAMTPDDRVAHLRDLVRTHVATVLGHGTPSRVDLERAFRDTGFDSLTAVELRNRLNAATGLRLPATLVFDHPTPGELAGHLLDELATAAGGSWAEGTGSGDTASATDRQTTAALAELDRLEGVLASLAPAAGGRPELAARLRALAAALGDDGDDATDLDEASDDDLFSFIDKELGDSDF</sequence>
<comment type="function">
    <text evidence="7 8 12">Involved in the biosynthesis of 12- and 14-membered ring macrolactone antibiotics such as methymycin/neomethymycin and pikromycin/narbomycin, respectively. Component of the pikromycin PKS which catalyzes the biosynthesis of both precursors 10-deoxymethynolide (12-membered ring macrolactone) and narbonolide (14-membered ring macrolactone). Chain elongation through PikAI, PikAII and PikAIII followed by thioesterase catalyzed termination results in the production of 10-deoxymethynolide, while continued elongation through PikAIV, followed by thioesterase (TE) catalyzed cyclization results in the biosynthesis of the narbonolide.</text>
</comment>
<comment type="catalytic activity">
    <reaction evidence="7 13">
        <text>5 (S)-methylmalonyl-CoA + malonyl-CoA + 5 NADPH + 11 H(+) = 10-deoxymethynolide + 6 CO2 + 5 NADP(+) + 6 CoA + 2 H2O</text>
        <dbReference type="Rhea" id="RHEA:43056"/>
        <dbReference type="ChEBI" id="CHEBI:15377"/>
        <dbReference type="ChEBI" id="CHEBI:15378"/>
        <dbReference type="ChEBI" id="CHEBI:16526"/>
        <dbReference type="ChEBI" id="CHEBI:29461"/>
        <dbReference type="ChEBI" id="CHEBI:57287"/>
        <dbReference type="ChEBI" id="CHEBI:57327"/>
        <dbReference type="ChEBI" id="CHEBI:57384"/>
        <dbReference type="ChEBI" id="CHEBI:57783"/>
        <dbReference type="ChEBI" id="CHEBI:58349"/>
        <dbReference type="EC" id="2.3.1.239"/>
    </reaction>
</comment>
<comment type="catalytic activity">
    <reaction evidence="7 13">
        <text>6 (S)-methylmalonyl-CoA + malonyl-CoA + 5 NADPH + 12 H(+) = narbonolide + 7 CO2 + 5 NADP(+) + 7 CoA + 2 H2O</text>
        <dbReference type="Rhea" id="RHEA:42844"/>
        <dbReference type="ChEBI" id="CHEBI:15377"/>
        <dbReference type="ChEBI" id="CHEBI:15378"/>
        <dbReference type="ChEBI" id="CHEBI:16526"/>
        <dbReference type="ChEBI" id="CHEBI:29650"/>
        <dbReference type="ChEBI" id="CHEBI:57287"/>
        <dbReference type="ChEBI" id="CHEBI:57327"/>
        <dbReference type="ChEBI" id="CHEBI:57384"/>
        <dbReference type="ChEBI" id="CHEBI:57783"/>
        <dbReference type="ChEBI" id="CHEBI:58349"/>
        <dbReference type="EC" id="2.3.1.240"/>
    </reaction>
</comment>
<comment type="cofactor">
    <cofactor evidence="13">
        <name>pantetheine 4'-phosphate</name>
        <dbReference type="ChEBI" id="CHEBI:47942"/>
    </cofactor>
    <text evidence="11">Binds 2 phosphopantetheines covalently.</text>
</comment>
<comment type="pathway">
    <text evidence="12 14">Antibiotic biosynthesis.</text>
</comment>
<comment type="subunit">
    <text evidence="8 12">Homodimer (PubMed:21570406). Pikromycin PKS consists of a combination of multimodular (PikAI and PikAII) and monomodular (PikAIII and PikAIV) polypeptides each coding for a functional synthase subunit which participates in 1 (monomodular) or 2 (multimodular) of the six FAS-like elongation steps required for formation of the polyketide. Module 1, 2, 3, 4, 5, and 6 participating in biosynthesis steps 1, 2, 3, 4, 5, and 6, respectively.</text>
</comment>
<comment type="miscellaneous">
    <text evidence="12 13">Type I modular polyketide synthases (PKSs) catalyze the step-wise condensation of simple carboxylic acid derivatives. Organizationally, type I PKSs are arranged into modules, wherein each module is comprised of a set of catalytic activities that is responsible for a single elongation of the polyketide chain and the appropriate reductive processing of the beta-keto functionality. A minimal elongation module contains an acyl transferase (AT) domain, an acyl-carrier protein (ACP) domain, and a ketosynthase (KS) domain. The AT domain is responsible for loading the methylmalonyl-CoA extender unit onto the phosphopantetheinylated ACP domain. Subsequently, the KS domain decarboxylates and then condenses the ACP-bound extender unit with the growing polyketide chain obtained from the preceding module to yield an ACP-bound beta-ketoacyl intermediate. In addition to the three core domains, each elongation module may contain up to three additional domains: a ketoreductase (KR), dehydratase (DH), and an enoyl reductase (ER) that are responsible for the reductive processing of the beta-keto functionality prior to the next extension step. The presence of a KR domain alone gives rise to a beta-hydroxyl functionality, the presence of both a KR and a DH domain generates an alkene, while the combination of KR, DH, and ER results in complete reduction to the alkane. Finally, a thioesterase (TE) domain, typically found at the terminus of the last elongation module, catalyzes the termination of polyketide biosynthesis. The activity of this domain results in cleavage of the acyl chain from the adjacent ACP and formation of the macrocyclic ring.</text>
</comment>
<comment type="miscellaneous">
    <text evidence="8">C2-type beta-ketoacyl reductase 1 is unable to bind NADP and seems to act as a racemase.</text>
</comment>